<evidence type="ECO:0000255" key="1"/>
<evidence type="ECO:0000269" key="2">
    <source>
    </source>
</evidence>
<evidence type="ECO:0000305" key="3"/>
<organism>
    <name type="scientific">Vibrio cholerae serotype O1 (strain ATCC 39315 / El Tor Inaba N16961)</name>
    <dbReference type="NCBI Taxonomy" id="243277"/>
    <lineage>
        <taxon>Bacteria</taxon>
        <taxon>Pseudomonadati</taxon>
        <taxon>Pseudomonadota</taxon>
        <taxon>Gammaproteobacteria</taxon>
        <taxon>Vibrionales</taxon>
        <taxon>Vibrionaceae</taxon>
        <taxon>Vibrio</taxon>
    </lineage>
</organism>
<dbReference type="EMBL" id="M62761">
    <property type="protein sequence ID" value="AAA63559.1"/>
    <property type="molecule type" value="Genomic_DNA"/>
</dbReference>
<dbReference type="EMBL" id="AE003852">
    <property type="protein sequence ID" value="AAF94144.1"/>
    <property type="molecule type" value="Genomic_DNA"/>
</dbReference>
<dbReference type="PIR" id="B38435">
    <property type="entry name" value="B38435"/>
</dbReference>
<dbReference type="RefSeq" id="NP_230629.1">
    <property type="nucleotide sequence ID" value="NC_002505.1"/>
</dbReference>
<dbReference type="RefSeq" id="WP_001181145.1">
    <property type="nucleotide sequence ID" value="NZ_LT906614.1"/>
</dbReference>
<dbReference type="SASBDB" id="P24003"/>
<dbReference type="SMR" id="P24003"/>
<dbReference type="STRING" id="243277.VC_0983"/>
<dbReference type="DNASU" id="2614236"/>
<dbReference type="EnsemblBacteria" id="AAF94144">
    <property type="protein sequence ID" value="AAF94144"/>
    <property type="gene ID" value="VC_0983"/>
</dbReference>
<dbReference type="KEGG" id="vch:VC_0983"/>
<dbReference type="PATRIC" id="fig|243277.26.peg.936"/>
<dbReference type="eggNOG" id="ENOG5031MTT">
    <property type="taxonomic scope" value="Bacteria"/>
</dbReference>
<dbReference type="HOGENOM" id="CLU_127087_0_0_6"/>
<dbReference type="PHI-base" id="PHI:11033"/>
<dbReference type="Proteomes" id="UP000000584">
    <property type="component" value="Chromosome 1"/>
</dbReference>
<dbReference type="GO" id="GO:0005886">
    <property type="term" value="C:plasma membrane"/>
    <property type="evidence" value="ECO:0007669"/>
    <property type="project" value="UniProtKB-SubCell"/>
</dbReference>
<dbReference type="InterPro" id="IPR035288">
    <property type="entry name" value="ToxS"/>
</dbReference>
<dbReference type="Pfam" id="PF17323">
    <property type="entry name" value="ToxS"/>
    <property type="match status" value="1"/>
</dbReference>
<name>TOXS_VIBCH</name>
<accession>P24003</accession>
<accession>Q9KTC0</accession>
<reference key="1">
    <citation type="journal article" date="1991" name="Cell">
        <title>Periplasmic interaction between two membrane regulatory proteins, ToxR and ToxS, results in signal transduction and transcriptional activation.</title>
        <authorList>
            <person name="DiRita V.J."/>
            <person name="Mekalanos J.J."/>
        </authorList>
    </citation>
    <scope>NUCLEOTIDE SEQUENCE [GENOMIC DNA]</scope>
    <scope>FUNCTION</scope>
    <scope>INTERACTION WITH TOXR</scope>
</reference>
<reference key="2">
    <citation type="journal article" date="2000" name="Nature">
        <title>DNA sequence of both chromosomes of the cholera pathogen Vibrio cholerae.</title>
        <authorList>
            <person name="Heidelberg J.F."/>
            <person name="Eisen J.A."/>
            <person name="Nelson W.C."/>
            <person name="Clayton R.A."/>
            <person name="Gwinn M.L."/>
            <person name="Dodson R.J."/>
            <person name="Haft D.H."/>
            <person name="Hickey E.K."/>
            <person name="Peterson J.D."/>
            <person name="Umayam L.A."/>
            <person name="Gill S.R."/>
            <person name="Nelson K.E."/>
            <person name="Read T.D."/>
            <person name="Tettelin H."/>
            <person name="Richardson D.L."/>
            <person name="Ermolaeva M.D."/>
            <person name="Vamathevan J.J."/>
            <person name="Bass S."/>
            <person name="Qin H."/>
            <person name="Dragoi I."/>
            <person name="Sellers P."/>
            <person name="McDonald L.A."/>
            <person name="Utterback T.R."/>
            <person name="Fleischmann R.D."/>
            <person name="Nierman W.C."/>
            <person name="White O."/>
            <person name="Salzberg S.L."/>
            <person name="Smith H.O."/>
            <person name="Colwell R.R."/>
            <person name="Mekalanos J.J."/>
            <person name="Venter J.C."/>
            <person name="Fraser C.M."/>
        </authorList>
    </citation>
    <scope>NUCLEOTIDE SEQUENCE [LARGE SCALE GENOMIC DNA]</scope>
    <source>
        <strain>ATCC 39315 / El Tor Inaba N16961</strain>
    </source>
</reference>
<keyword id="KW-1003">Cell membrane</keyword>
<keyword id="KW-0472">Membrane</keyword>
<keyword id="KW-1185">Reference proteome</keyword>
<keyword id="KW-0812">Transmembrane</keyword>
<keyword id="KW-1133">Transmembrane helix</keyword>
<proteinExistence type="evidence at protein level"/>
<feature type="chain" id="PRO_0000072639" description="Transmembrane regulatory protein ToxS">
    <location>
        <begin position="1"/>
        <end position="173"/>
    </location>
</feature>
<feature type="topological domain" description="Cytoplasmic" evidence="1">
    <location>
        <begin position="1"/>
        <end position="5"/>
    </location>
</feature>
<feature type="transmembrane region" description="Helical" evidence="1">
    <location>
        <begin position="6"/>
        <end position="25"/>
    </location>
</feature>
<feature type="topological domain" description="Periplasmic" evidence="1">
    <location>
        <begin position="26"/>
        <end position="173"/>
    </location>
</feature>
<feature type="sequence conflict" description="In Ref. 1; AAA63559." evidence="3" ref="1">
    <original>N</original>
    <variation>K</variation>
    <location>
        <position position="172"/>
    </location>
</feature>
<sequence>MQNRHIAMGILLLSLLLSSWLYWGSDFKLEQVLTSREWQSKMVSLIKTNSNRPAMGPLSRVDVTSNVKYLPNGTYLRVSIVKLFSDDNSAESVINISEFGEWDISDNYLLVTPVEFKDISSNQSKDFTDEQLQLITQLFKMDAQQSRRVDIVNERTILFTSLSHGSTVLFSNS</sequence>
<gene>
    <name type="primary">toxS</name>
    <name type="ordered locus">VC_0983</name>
</gene>
<protein>
    <recommendedName>
        <fullName>Transmembrane regulatory protein ToxS</fullName>
    </recommendedName>
</protein>
<comment type="function">
    <text evidence="2">Interacts with ToxR and stimulates its activity.</text>
</comment>
<comment type="subunit">
    <text evidence="2">Interacts with the C-terminal periplasmic domain of ToxR, possibly by binding and stabilizing spontaneously forming ToxR dimers.</text>
</comment>
<comment type="subcellular location">
    <subcellularLocation>
        <location>Cell membrane</location>
        <topology>Single-pass membrane protein</topology>
        <orientation>Periplasmic side</orientation>
    </subcellularLocation>
</comment>